<keyword id="KW-0027">Amidation</keyword>
<keyword id="KW-0878">Amphibian defense peptide</keyword>
<keyword id="KW-0929">Antimicrobial</keyword>
<keyword id="KW-0903">Direct protein sequencing</keyword>
<keyword id="KW-0964">Secreted</keyword>
<reference key="1">
    <citation type="journal article" date="2006" name="Biochem. Biophys. Res. Commun.">
        <title>Novel dermaseptins from Phyllomedusa hypochondrialis (Amphibia).</title>
        <authorList>
            <person name="Brand G.D."/>
            <person name="Leite J.R.S.A."/>
            <person name="de Sa Mandel S.M."/>
            <person name="Mesquita D.A."/>
            <person name="Silva L.P."/>
            <person name="Prates M.V."/>
            <person name="Barbosa E.A."/>
            <person name="Vinecky F."/>
            <person name="Martins G.R."/>
            <person name="Galasso J.H."/>
            <person name="Kuckelhaus S.A.S."/>
            <person name="Sampaio R.N.R."/>
            <person name="Furtado J.R. Jr."/>
            <person name="Andrade A.C."/>
            <person name="Bloch C. Jr."/>
        </authorList>
    </citation>
    <scope>PROTEIN SEQUENCE</scope>
    <scope>SUBCELLULAR LOCATION</scope>
    <scope>TISSUE SPECIFICITY</scope>
    <scope>MASS SPECTROMETRY</scope>
    <scope>AMIDATION AT LEU-33</scope>
    <source>
        <tissue>Skin secretion</tissue>
    </source>
</reference>
<reference key="2">
    <citation type="journal article" date="2008" name="Peptides">
        <title>A consistent nomenclature of antimicrobial peptides isolated from frogs of the subfamily Phyllomedusinae.</title>
        <authorList>
            <person name="Amiche M."/>
            <person name="Ladram A."/>
            <person name="Nicolas P."/>
        </authorList>
    </citation>
    <scope>NOMENCLATURE</scope>
</reference>
<accession>P84599</accession>
<dbReference type="SMR" id="P84599"/>
<dbReference type="GO" id="GO:0005576">
    <property type="term" value="C:extracellular region"/>
    <property type="evidence" value="ECO:0007669"/>
    <property type="project" value="UniProtKB-SubCell"/>
</dbReference>
<dbReference type="GO" id="GO:0006952">
    <property type="term" value="P:defense response"/>
    <property type="evidence" value="ECO:0007669"/>
    <property type="project" value="UniProtKB-KW"/>
</dbReference>
<dbReference type="InterPro" id="IPR022731">
    <property type="entry name" value="Dermaseptin_dom"/>
</dbReference>
<dbReference type="Pfam" id="PF12121">
    <property type="entry name" value="DD_K"/>
    <property type="match status" value="1"/>
</dbReference>
<feature type="peptide" id="PRO_0000248496" description="Dermaseptin-H6">
    <location>
        <begin position="1"/>
        <end position="33"/>
    </location>
</feature>
<feature type="modified residue" description="Leucine amide" evidence="3">
    <location>
        <position position="33"/>
    </location>
</feature>
<name>DRS6_PITHY</name>
<organism>
    <name type="scientific">Pithecopus hypochondrialis</name>
    <name type="common">Orange-legged leaf frog</name>
    <name type="synonym">Phyllomedusa hypochondrialis</name>
    <dbReference type="NCBI Taxonomy" id="317381"/>
    <lineage>
        <taxon>Eukaryota</taxon>
        <taxon>Metazoa</taxon>
        <taxon>Chordata</taxon>
        <taxon>Craniata</taxon>
        <taxon>Vertebrata</taxon>
        <taxon>Euteleostomi</taxon>
        <taxon>Amphibia</taxon>
        <taxon>Batrachia</taxon>
        <taxon>Anura</taxon>
        <taxon>Neobatrachia</taxon>
        <taxon>Hyloidea</taxon>
        <taxon>Hylidae</taxon>
        <taxon>Phyllomedusinae</taxon>
        <taxon>Pithecopus</taxon>
    </lineage>
</organism>
<evidence type="ECO:0000250" key="1">
    <source>
        <dbReference type="UniProtKB" id="P83637"/>
    </source>
</evidence>
<evidence type="ECO:0000255" key="2"/>
<evidence type="ECO:0000269" key="3">
    <source>
    </source>
</evidence>
<evidence type="ECO:0000303" key="4">
    <source>
    </source>
</evidence>
<evidence type="ECO:0000303" key="5">
    <source>
    </source>
</evidence>
<sequence>GLWSTIKQKGKEAAIAAAKAAGKAVLNAASEAL</sequence>
<proteinExistence type="evidence at protein level"/>
<comment type="function">
    <text evidence="1">Has antimicrobial activity.</text>
</comment>
<comment type="subcellular location">
    <subcellularLocation>
        <location evidence="3">Secreted</location>
    </subcellularLocation>
</comment>
<comment type="tissue specificity">
    <text evidence="3">Expressed by the skin glands.</text>
</comment>
<comment type="mass spectrometry"/>
<comment type="similarity">
    <text evidence="2">Belongs to the frog skin active peptide (FSAP) family. Dermaseptin subfamily.</text>
</comment>
<comment type="online information" name="The antimicrobial peptide database">
    <link uri="https://wangapd3.com/database/query_output.php?ID=0947"/>
</comment>
<protein>
    <recommendedName>
        <fullName evidence="5">Dermaseptin-H6</fullName>
        <shortName evidence="5">DRS-H6</shortName>
    </recommendedName>
    <alternativeName>
        <fullName evidence="4">DShypo 04</fullName>
    </alternativeName>
</protein>